<dbReference type="EC" id="2.2.1.2" evidence="1"/>
<dbReference type="EMBL" id="CP000003">
    <property type="protein sequence ID" value="AAT87559.1"/>
    <property type="molecule type" value="Genomic_DNA"/>
</dbReference>
<dbReference type="SMR" id="Q5XAK4"/>
<dbReference type="KEGG" id="spa:M6_Spy1424"/>
<dbReference type="HOGENOM" id="CLU_079764_0_0_9"/>
<dbReference type="UniPathway" id="UPA00115">
    <property type="reaction ID" value="UER00414"/>
</dbReference>
<dbReference type="Proteomes" id="UP000001167">
    <property type="component" value="Chromosome"/>
</dbReference>
<dbReference type="GO" id="GO:0005737">
    <property type="term" value="C:cytoplasm"/>
    <property type="evidence" value="ECO:0007669"/>
    <property type="project" value="UniProtKB-SubCell"/>
</dbReference>
<dbReference type="GO" id="GO:0016832">
    <property type="term" value="F:aldehyde-lyase activity"/>
    <property type="evidence" value="ECO:0007669"/>
    <property type="project" value="InterPro"/>
</dbReference>
<dbReference type="GO" id="GO:0004801">
    <property type="term" value="F:transaldolase activity"/>
    <property type="evidence" value="ECO:0007669"/>
    <property type="project" value="UniProtKB-UniRule"/>
</dbReference>
<dbReference type="GO" id="GO:0005975">
    <property type="term" value="P:carbohydrate metabolic process"/>
    <property type="evidence" value="ECO:0007669"/>
    <property type="project" value="InterPro"/>
</dbReference>
<dbReference type="GO" id="GO:0006098">
    <property type="term" value="P:pentose-phosphate shunt"/>
    <property type="evidence" value="ECO:0007669"/>
    <property type="project" value="UniProtKB-UniRule"/>
</dbReference>
<dbReference type="CDD" id="cd00956">
    <property type="entry name" value="Transaldolase_FSA"/>
    <property type="match status" value="1"/>
</dbReference>
<dbReference type="FunFam" id="3.20.20.70:FF:000018">
    <property type="entry name" value="Probable transaldolase"/>
    <property type="match status" value="1"/>
</dbReference>
<dbReference type="Gene3D" id="3.20.20.70">
    <property type="entry name" value="Aldolase class I"/>
    <property type="match status" value="1"/>
</dbReference>
<dbReference type="HAMAP" id="MF_00494">
    <property type="entry name" value="Transaldolase_3b"/>
    <property type="match status" value="1"/>
</dbReference>
<dbReference type="InterPro" id="IPR013785">
    <property type="entry name" value="Aldolase_TIM"/>
</dbReference>
<dbReference type="InterPro" id="IPR001585">
    <property type="entry name" value="TAL/FSA"/>
</dbReference>
<dbReference type="InterPro" id="IPR022999">
    <property type="entry name" value="Transaldolase_3B"/>
</dbReference>
<dbReference type="InterPro" id="IPR004731">
    <property type="entry name" value="Transaldolase_3B/F6P_aldolase"/>
</dbReference>
<dbReference type="InterPro" id="IPR018225">
    <property type="entry name" value="Transaldolase_AS"/>
</dbReference>
<dbReference type="InterPro" id="IPR033919">
    <property type="entry name" value="TSA/FSA_arc/bac"/>
</dbReference>
<dbReference type="NCBIfam" id="TIGR00875">
    <property type="entry name" value="fsa_talC_mipB"/>
    <property type="match status" value="1"/>
</dbReference>
<dbReference type="PANTHER" id="PTHR10683">
    <property type="entry name" value="TRANSALDOLASE"/>
    <property type="match status" value="1"/>
</dbReference>
<dbReference type="PANTHER" id="PTHR10683:SF36">
    <property type="entry name" value="TRANSALDOLASE"/>
    <property type="match status" value="1"/>
</dbReference>
<dbReference type="Pfam" id="PF00923">
    <property type="entry name" value="TAL_FSA"/>
    <property type="match status" value="1"/>
</dbReference>
<dbReference type="SUPFAM" id="SSF51569">
    <property type="entry name" value="Aldolase"/>
    <property type="match status" value="1"/>
</dbReference>
<dbReference type="PROSITE" id="PS01054">
    <property type="entry name" value="TRANSALDOLASE_1"/>
    <property type="match status" value="1"/>
</dbReference>
<dbReference type="PROSITE" id="PS00958">
    <property type="entry name" value="TRANSALDOLASE_2"/>
    <property type="match status" value="1"/>
</dbReference>
<gene>
    <name evidence="1" type="primary">tal</name>
    <name type="ordered locus">M6_Spy1424</name>
</gene>
<proteinExistence type="inferred from homology"/>
<comment type="function">
    <text evidence="1">Transaldolase is important for the balance of metabolites in the pentose-phosphate pathway.</text>
</comment>
<comment type="catalytic activity">
    <reaction evidence="1">
        <text>D-sedoheptulose 7-phosphate + D-glyceraldehyde 3-phosphate = D-erythrose 4-phosphate + beta-D-fructose 6-phosphate</text>
        <dbReference type="Rhea" id="RHEA:17053"/>
        <dbReference type="ChEBI" id="CHEBI:16897"/>
        <dbReference type="ChEBI" id="CHEBI:57483"/>
        <dbReference type="ChEBI" id="CHEBI:57634"/>
        <dbReference type="ChEBI" id="CHEBI:59776"/>
        <dbReference type="EC" id="2.2.1.2"/>
    </reaction>
</comment>
<comment type="pathway">
    <text evidence="1">Carbohydrate degradation; pentose phosphate pathway; D-glyceraldehyde 3-phosphate and beta-D-fructose 6-phosphate from D-ribose 5-phosphate and D-xylulose 5-phosphate (non-oxidative stage): step 2/3.</text>
</comment>
<comment type="subcellular location">
    <subcellularLocation>
        <location evidence="1">Cytoplasm</location>
    </subcellularLocation>
</comment>
<comment type="similarity">
    <text evidence="1">Belongs to the transaldolase family. Type 3B subfamily.</text>
</comment>
<keyword id="KW-0963">Cytoplasm</keyword>
<keyword id="KW-0570">Pentose shunt</keyword>
<keyword id="KW-0704">Schiff base</keyword>
<keyword id="KW-0808">Transferase</keyword>
<organism>
    <name type="scientific">Streptococcus pyogenes serotype M6 (strain ATCC BAA-946 / MGAS10394)</name>
    <dbReference type="NCBI Taxonomy" id="286636"/>
    <lineage>
        <taxon>Bacteria</taxon>
        <taxon>Bacillati</taxon>
        <taxon>Bacillota</taxon>
        <taxon>Bacilli</taxon>
        <taxon>Lactobacillales</taxon>
        <taxon>Streptococcaceae</taxon>
        <taxon>Streptococcus</taxon>
    </lineage>
</organism>
<accession>Q5XAK4</accession>
<evidence type="ECO:0000255" key="1">
    <source>
        <dbReference type="HAMAP-Rule" id="MF_00494"/>
    </source>
</evidence>
<sequence length="214" mass="23272">MKFFLDTANVAAIKAINELGVVDGVTTNPTIISREGRDFETVIKEICDIVDGPISAEVTGLTADAMVEEARSIAKWHDNVVVKIPMTTEGLKATNILSKEGIKTNVTLIFTVSQGLMAMKAGATYISPFIGRLEDIGTDAYQLISDLREIIDLYDFQAEIIAASIRTTAHVEAVAKLGAHIATIPDPLFAKMTQHPLTTNGLKTFMEDWASFKK</sequence>
<feature type="chain" id="PRO_0000173685" description="Probable transaldolase">
    <location>
        <begin position="1"/>
        <end position="214"/>
    </location>
</feature>
<feature type="active site" description="Schiff-base intermediate with substrate" evidence="1">
    <location>
        <position position="83"/>
    </location>
</feature>
<protein>
    <recommendedName>
        <fullName evidence="1">Probable transaldolase</fullName>
        <ecNumber evidence="1">2.2.1.2</ecNumber>
    </recommendedName>
</protein>
<reference key="1">
    <citation type="journal article" date="2004" name="J. Infect. Dis.">
        <title>Progress toward characterization of the group A Streptococcus metagenome: complete genome sequence of a macrolide-resistant serotype M6 strain.</title>
        <authorList>
            <person name="Banks D.J."/>
            <person name="Porcella S.F."/>
            <person name="Barbian K.D."/>
            <person name="Beres S.B."/>
            <person name="Philips L.E."/>
            <person name="Voyich J.M."/>
            <person name="DeLeo F.R."/>
            <person name="Martin J.M."/>
            <person name="Somerville G.A."/>
            <person name="Musser J.M."/>
        </authorList>
    </citation>
    <scope>NUCLEOTIDE SEQUENCE [LARGE SCALE GENOMIC DNA]</scope>
    <source>
        <strain>ATCC BAA-946 / MGAS10394</strain>
    </source>
</reference>
<name>TAL_STRP6</name>